<name>MUTS_SYMTH</name>
<organism>
    <name type="scientific">Symbiobacterium thermophilum (strain DSM 24528 / JCM 14929 / IAM 14863 / T)</name>
    <dbReference type="NCBI Taxonomy" id="292459"/>
    <lineage>
        <taxon>Bacteria</taxon>
        <taxon>Bacillati</taxon>
        <taxon>Bacillota</taxon>
        <taxon>Clostridia</taxon>
        <taxon>Eubacteriales</taxon>
        <taxon>Symbiobacteriaceae</taxon>
        <taxon>Symbiobacterium</taxon>
    </lineage>
</organism>
<gene>
    <name evidence="1" type="primary">mutS</name>
    <name type="ordered locus">STH1757</name>
</gene>
<proteinExistence type="inferred from homology"/>
<dbReference type="EMBL" id="AP006840">
    <property type="protein sequence ID" value="BAD40742.1"/>
    <property type="molecule type" value="Genomic_DNA"/>
</dbReference>
<dbReference type="SMR" id="Q67NK1"/>
<dbReference type="STRING" id="292459.STH1757"/>
<dbReference type="KEGG" id="sth:STH1757"/>
<dbReference type="eggNOG" id="COG0249">
    <property type="taxonomic scope" value="Bacteria"/>
</dbReference>
<dbReference type="HOGENOM" id="CLU_002472_1_3_9"/>
<dbReference type="OrthoDB" id="9802448at2"/>
<dbReference type="Proteomes" id="UP000000417">
    <property type="component" value="Chromosome"/>
</dbReference>
<dbReference type="GO" id="GO:0005829">
    <property type="term" value="C:cytosol"/>
    <property type="evidence" value="ECO:0007669"/>
    <property type="project" value="TreeGrafter"/>
</dbReference>
<dbReference type="GO" id="GO:0005524">
    <property type="term" value="F:ATP binding"/>
    <property type="evidence" value="ECO:0007669"/>
    <property type="project" value="UniProtKB-UniRule"/>
</dbReference>
<dbReference type="GO" id="GO:0140664">
    <property type="term" value="F:ATP-dependent DNA damage sensor activity"/>
    <property type="evidence" value="ECO:0007669"/>
    <property type="project" value="InterPro"/>
</dbReference>
<dbReference type="GO" id="GO:0003684">
    <property type="term" value="F:damaged DNA binding"/>
    <property type="evidence" value="ECO:0007669"/>
    <property type="project" value="UniProtKB-UniRule"/>
</dbReference>
<dbReference type="GO" id="GO:0030983">
    <property type="term" value="F:mismatched DNA binding"/>
    <property type="evidence" value="ECO:0007669"/>
    <property type="project" value="InterPro"/>
</dbReference>
<dbReference type="GO" id="GO:0006298">
    <property type="term" value="P:mismatch repair"/>
    <property type="evidence" value="ECO:0007669"/>
    <property type="project" value="UniProtKB-UniRule"/>
</dbReference>
<dbReference type="CDD" id="cd03284">
    <property type="entry name" value="ABC_MutS1"/>
    <property type="match status" value="1"/>
</dbReference>
<dbReference type="FunFam" id="1.10.1420.10:FF:000007">
    <property type="entry name" value="DNA mismatch repair protein MutS"/>
    <property type="match status" value="1"/>
</dbReference>
<dbReference type="FunFam" id="3.40.1170.10:FF:000001">
    <property type="entry name" value="DNA mismatch repair protein MutS"/>
    <property type="match status" value="1"/>
</dbReference>
<dbReference type="FunFam" id="3.40.50.300:FF:000870">
    <property type="entry name" value="MutS protein homolog 4"/>
    <property type="match status" value="1"/>
</dbReference>
<dbReference type="Gene3D" id="1.10.1420.10">
    <property type="match status" value="2"/>
</dbReference>
<dbReference type="Gene3D" id="3.40.1170.10">
    <property type="entry name" value="DNA repair protein MutS, domain I"/>
    <property type="match status" value="1"/>
</dbReference>
<dbReference type="Gene3D" id="3.30.420.110">
    <property type="entry name" value="MutS, connector domain"/>
    <property type="match status" value="1"/>
</dbReference>
<dbReference type="Gene3D" id="3.40.50.300">
    <property type="entry name" value="P-loop containing nucleotide triphosphate hydrolases"/>
    <property type="match status" value="1"/>
</dbReference>
<dbReference type="HAMAP" id="MF_00096">
    <property type="entry name" value="MutS"/>
    <property type="match status" value="1"/>
</dbReference>
<dbReference type="InterPro" id="IPR005748">
    <property type="entry name" value="DNA_mismatch_repair_MutS"/>
</dbReference>
<dbReference type="InterPro" id="IPR007695">
    <property type="entry name" value="DNA_mismatch_repair_MutS-lik_N"/>
</dbReference>
<dbReference type="InterPro" id="IPR017261">
    <property type="entry name" value="DNA_mismatch_repair_MutS/MSH"/>
</dbReference>
<dbReference type="InterPro" id="IPR000432">
    <property type="entry name" value="DNA_mismatch_repair_MutS_C"/>
</dbReference>
<dbReference type="InterPro" id="IPR007861">
    <property type="entry name" value="DNA_mismatch_repair_MutS_clamp"/>
</dbReference>
<dbReference type="InterPro" id="IPR007696">
    <property type="entry name" value="DNA_mismatch_repair_MutS_core"/>
</dbReference>
<dbReference type="InterPro" id="IPR016151">
    <property type="entry name" value="DNA_mismatch_repair_MutS_N"/>
</dbReference>
<dbReference type="InterPro" id="IPR036187">
    <property type="entry name" value="DNA_mismatch_repair_MutS_sf"/>
</dbReference>
<dbReference type="InterPro" id="IPR007860">
    <property type="entry name" value="DNA_mmatch_repair_MutS_con_dom"/>
</dbReference>
<dbReference type="InterPro" id="IPR045076">
    <property type="entry name" value="MutS"/>
</dbReference>
<dbReference type="InterPro" id="IPR036678">
    <property type="entry name" value="MutS_con_dom_sf"/>
</dbReference>
<dbReference type="InterPro" id="IPR027417">
    <property type="entry name" value="P-loop_NTPase"/>
</dbReference>
<dbReference type="NCBIfam" id="TIGR01070">
    <property type="entry name" value="mutS1"/>
    <property type="match status" value="1"/>
</dbReference>
<dbReference type="NCBIfam" id="NF003810">
    <property type="entry name" value="PRK05399.1"/>
    <property type="match status" value="1"/>
</dbReference>
<dbReference type="PANTHER" id="PTHR11361:SF34">
    <property type="entry name" value="DNA MISMATCH REPAIR PROTEIN MSH1, MITOCHONDRIAL"/>
    <property type="match status" value="1"/>
</dbReference>
<dbReference type="PANTHER" id="PTHR11361">
    <property type="entry name" value="DNA MISMATCH REPAIR PROTEIN MUTS FAMILY MEMBER"/>
    <property type="match status" value="1"/>
</dbReference>
<dbReference type="Pfam" id="PF01624">
    <property type="entry name" value="MutS_I"/>
    <property type="match status" value="1"/>
</dbReference>
<dbReference type="Pfam" id="PF05188">
    <property type="entry name" value="MutS_II"/>
    <property type="match status" value="1"/>
</dbReference>
<dbReference type="Pfam" id="PF05192">
    <property type="entry name" value="MutS_III"/>
    <property type="match status" value="1"/>
</dbReference>
<dbReference type="Pfam" id="PF05190">
    <property type="entry name" value="MutS_IV"/>
    <property type="match status" value="1"/>
</dbReference>
<dbReference type="Pfam" id="PF00488">
    <property type="entry name" value="MutS_V"/>
    <property type="match status" value="1"/>
</dbReference>
<dbReference type="PIRSF" id="PIRSF037677">
    <property type="entry name" value="DNA_mis_repair_Msh6"/>
    <property type="match status" value="1"/>
</dbReference>
<dbReference type="SMART" id="SM00534">
    <property type="entry name" value="MUTSac"/>
    <property type="match status" value="1"/>
</dbReference>
<dbReference type="SMART" id="SM00533">
    <property type="entry name" value="MUTSd"/>
    <property type="match status" value="1"/>
</dbReference>
<dbReference type="SUPFAM" id="SSF55271">
    <property type="entry name" value="DNA repair protein MutS, domain I"/>
    <property type="match status" value="1"/>
</dbReference>
<dbReference type="SUPFAM" id="SSF53150">
    <property type="entry name" value="DNA repair protein MutS, domain II"/>
    <property type="match status" value="1"/>
</dbReference>
<dbReference type="SUPFAM" id="SSF48334">
    <property type="entry name" value="DNA repair protein MutS, domain III"/>
    <property type="match status" value="1"/>
</dbReference>
<dbReference type="SUPFAM" id="SSF52540">
    <property type="entry name" value="P-loop containing nucleoside triphosphate hydrolases"/>
    <property type="match status" value="1"/>
</dbReference>
<dbReference type="PROSITE" id="PS00486">
    <property type="entry name" value="DNA_MISMATCH_REPAIR_2"/>
    <property type="match status" value="1"/>
</dbReference>
<evidence type="ECO:0000255" key="1">
    <source>
        <dbReference type="HAMAP-Rule" id="MF_00096"/>
    </source>
</evidence>
<protein>
    <recommendedName>
        <fullName evidence="1">DNA mismatch repair protein MutS</fullName>
    </recommendedName>
</protein>
<reference key="1">
    <citation type="journal article" date="2004" name="Nucleic Acids Res.">
        <title>Genome sequence of Symbiobacterium thermophilum, an uncultivable bacterium that depends on microbial commensalism.</title>
        <authorList>
            <person name="Ueda K."/>
            <person name="Yamashita A."/>
            <person name="Ishikawa J."/>
            <person name="Shimada M."/>
            <person name="Watsuji T."/>
            <person name="Morimura K."/>
            <person name="Ikeda H."/>
            <person name="Hattori M."/>
            <person name="Beppu T."/>
        </authorList>
    </citation>
    <scope>NUCLEOTIDE SEQUENCE [LARGE SCALE GENOMIC DNA]</scope>
    <source>
        <strain>DSM 24528 / JCM 14929 / IAM 14863 / T</strain>
    </source>
</reference>
<comment type="function">
    <text evidence="1">This protein is involved in the repair of mismatches in DNA. It is possible that it carries out the mismatch recognition step. This protein has a weak ATPase activity.</text>
</comment>
<comment type="similarity">
    <text evidence="1">Belongs to the DNA mismatch repair MutS family.</text>
</comment>
<feature type="chain" id="PRO_0000224413" description="DNA mismatch repair protein MutS">
    <location>
        <begin position="1"/>
        <end position="875"/>
    </location>
</feature>
<feature type="binding site" evidence="1">
    <location>
        <begin position="625"/>
        <end position="632"/>
    </location>
    <ligand>
        <name>ATP</name>
        <dbReference type="ChEBI" id="CHEBI:30616"/>
    </ligand>
</feature>
<accession>Q67NK1</accession>
<sequence length="875" mass="96685">MDPAKATPMFAQYLQIKEQYPDCILFYRLGDFYETFMDDAELVARELELVLTGRDAGKDMGRVPMAGIPYHAAEAYIARLIEKGYKVAICDQLEDPKKAKGLVKRDVTRVVTPGTLVEPRLLPEKANNFLAAIAWSRTGFGLAVVDLSTGEFAAAQMNGADSLRLLLEEIGRLEPREVILEPGLAAEPSVTGPLKASGIAVSVFEGRHFNHANAYRKLTEHFGTANLSGFGCEDLELATSAAGAALAYLEEMHKASLGHVSGLAVYYPGDYMVLDPATRRNLELTRSLRDGGRRGTLLWVMDRTVTAMGARLLKSWLERPLLDLRQIHARHEAVGELVHRPVLRADLRALLQEVHDLERLAGRVAVGSANARDLVALKQSLVALPSIRVALEDVRAERLVELRDQLDMLDDVRDLIEHAIADEPPVALTEGGILKDGFHPEVDELRRIARDGKAWIAQVEARERERTGIKSLKIGYNKVFGYYLAVTKPNLPLVPPDYIRKQTLANEERFITPELKELEEKVLHAAERVMDLEYELFVEIRQRVAAEVTRIQRSARAVAELDALASFAEVASLYGYCRPLVDGSTVLELKGSRHPVLERVMEEGAFVPNDLLVDTGENRVLLITGPNMGGKSTVMRQAALAVILAQAGSFVPAESAHIGLVDRVFTRVGASDDLATGRSTFMVEMTEVANILHSATERSLVVLDEVGRGTATFDGLSIAWAITEHIHQAIGCRTLFATHYHELCELEGILPGVKNYSVAVMEKGEDIIFLRKLVRGGADRSYGIQVGRLAGLPASVVERAREILATLEEQEGERKSRREAAAQRLRRQPAVQLTFFEPKKDPVVEELLGLNVMALTPIEALNTLYQLQAKAKENR</sequence>
<keyword id="KW-0067">ATP-binding</keyword>
<keyword id="KW-0227">DNA damage</keyword>
<keyword id="KW-0234">DNA repair</keyword>
<keyword id="KW-0238">DNA-binding</keyword>
<keyword id="KW-0547">Nucleotide-binding</keyword>
<keyword id="KW-1185">Reference proteome</keyword>